<reference key="1">
    <citation type="submission" date="2005-11" db="EMBL/GenBank/DDBJ databases">
        <authorList>
            <consortium name="NIH - Mammalian Gene Collection (MGC) project"/>
        </authorList>
    </citation>
    <scope>NUCLEOTIDE SEQUENCE [LARGE SCALE MRNA]</scope>
    <source>
        <strain>Crossbred X Angus</strain>
        <tissue>Liver</tissue>
    </source>
</reference>
<keyword id="KW-0963">Cytoplasm</keyword>
<keyword id="KW-0458">Lysosome</keyword>
<keyword id="KW-0472">Membrane</keyword>
<keyword id="KW-1185">Reference proteome</keyword>
<keyword id="KW-0812">Transmembrane</keyword>
<keyword id="KW-1133">Transmembrane helix</keyword>
<sequence>MDHKPLLQERPPAYNLEAGQGEFACAPHGYGAIAAAPPPPYPYLVTGIPTHHPRVYNIHSRNVTRYPANSIVVVGGCPVCRVGVLEDSFTFLGIFLAIVLFPFGFICCFALRKRRCPNCGANFT</sequence>
<protein>
    <recommendedName>
        <fullName evidence="3">Membrane protein BRI3</fullName>
    </recommendedName>
    <alternativeName>
        <fullName evidence="3">Brain protein I3</fullName>
    </alternativeName>
</protein>
<proteinExistence type="evidence at transcript level"/>
<gene>
    <name type="primary">BRI3</name>
</gene>
<comment type="function">
    <text evidence="1">Participates in tumor necrosis factor-alpha (TNF)-induced cell death. May be a target of Wnt/beta-catenin signaling in the liver.</text>
</comment>
<comment type="subunit">
    <text evidence="1">Interacts with BRI3BP. Interacts with MGAT1 and IFITM3 (By similarity).</text>
</comment>
<comment type="subcellular location">
    <subcellularLocation>
        <location evidence="1">Lysosome membrane</location>
        <topology evidence="2">Multi-pass membrane protein</topology>
    </subcellularLocation>
    <subcellularLocation>
        <location evidence="1">Cytoplasm</location>
        <location evidence="1">Perinuclear region</location>
    </subcellularLocation>
    <text evidence="1">Co-localizes with MGAT1 and IFITM3 at the perinuclear region.</text>
</comment>
<comment type="similarity">
    <text evidence="3">Belongs to the BRI3 family.</text>
</comment>
<dbReference type="EMBL" id="BC109710">
    <property type="protein sequence ID" value="AAI09711.1"/>
    <property type="molecule type" value="mRNA"/>
</dbReference>
<dbReference type="RefSeq" id="NP_001035673.1">
    <property type="nucleotide sequence ID" value="NM_001040583.1"/>
</dbReference>
<dbReference type="SMR" id="Q32L83"/>
<dbReference type="FunCoup" id="Q32L83">
    <property type="interactions" value="350"/>
</dbReference>
<dbReference type="PaxDb" id="9913-ENSBTAP00000048073"/>
<dbReference type="GeneID" id="615390"/>
<dbReference type="KEGG" id="bta:615390"/>
<dbReference type="CTD" id="25798"/>
<dbReference type="VEuPathDB" id="HostDB:ENSBTAG00000022825"/>
<dbReference type="eggNOG" id="KOG4517">
    <property type="taxonomic scope" value="Eukaryota"/>
</dbReference>
<dbReference type="InParanoid" id="Q32L83"/>
<dbReference type="OMA" id="YEYGPQQ"/>
<dbReference type="OrthoDB" id="2564984at2759"/>
<dbReference type="Reactome" id="R-BTA-6798695">
    <property type="pathway name" value="Neutrophil degranulation"/>
</dbReference>
<dbReference type="Proteomes" id="UP000009136">
    <property type="component" value="Chromosome 25"/>
</dbReference>
<dbReference type="Bgee" id="ENSBTAG00000022825">
    <property type="expression patterns" value="Expressed in tongue muscle and 104 other cell types or tissues"/>
</dbReference>
<dbReference type="GO" id="GO:0005765">
    <property type="term" value="C:lysosomal membrane"/>
    <property type="evidence" value="ECO:0007669"/>
    <property type="project" value="UniProtKB-SubCell"/>
</dbReference>
<dbReference type="GO" id="GO:0048471">
    <property type="term" value="C:perinuclear region of cytoplasm"/>
    <property type="evidence" value="ECO:0007669"/>
    <property type="project" value="UniProtKB-SubCell"/>
</dbReference>
<dbReference type="InterPro" id="IPR019317">
    <property type="entry name" value="BRI3"/>
</dbReference>
<dbReference type="PANTHER" id="PTHR13551">
    <property type="entry name" value="BRAIN PROTEIN I3"/>
    <property type="match status" value="1"/>
</dbReference>
<dbReference type="PANTHER" id="PTHR13551:SF1">
    <property type="entry name" value="MEMBRANE PROTEIN BRI3"/>
    <property type="match status" value="1"/>
</dbReference>
<dbReference type="Pfam" id="PF10164">
    <property type="entry name" value="BRI3"/>
    <property type="match status" value="1"/>
</dbReference>
<organism>
    <name type="scientific">Bos taurus</name>
    <name type="common">Bovine</name>
    <dbReference type="NCBI Taxonomy" id="9913"/>
    <lineage>
        <taxon>Eukaryota</taxon>
        <taxon>Metazoa</taxon>
        <taxon>Chordata</taxon>
        <taxon>Craniata</taxon>
        <taxon>Vertebrata</taxon>
        <taxon>Euteleostomi</taxon>
        <taxon>Mammalia</taxon>
        <taxon>Eutheria</taxon>
        <taxon>Laurasiatheria</taxon>
        <taxon>Artiodactyla</taxon>
        <taxon>Ruminantia</taxon>
        <taxon>Pecora</taxon>
        <taxon>Bovidae</taxon>
        <taxon>Bovinae</taxon>
        <taxon>Bos</taxon>
    </lineage>
</organism>
<evidence type="ECO:0000250" key="1">
    <source>
        <dbReference type="UniProtKB" id="O95415"/>
    </source>
</evidence>
<evidence type="ECO:0000255" key="2"/>
<evidence type="ECO:0000305" key="3"/>
<feature type="chain" id="PRO_0000317692" description="Membrane protein BRI3">
    <location>
        <begin position="1"/>
        <end position="124"/>
    </location>
</feature>
<feature type="transmembrane region" description="Helical" evidence="2">
    <location>
        <begin position="66"/>
        <end position="85"/>
    </location>
</feature>
<feature type="transmembrane region" description="Helical" evidence="2">
    <location>
        <begin position="91"/>
        <end position="111"/>
    </location>
</feature>
<name>BRI3_BOVIN</name>
<accession>Q32L83</accession>